<evidence type="ECO:0000255" key="1">
    <source>
        <dbReference type="HAMAP-Rule" id="MF_00300"/>
    </source>
</evidence>
<feature type="chain" id="PRO_0000140552" description="Chorismate synthase">
    <location>
        <begin position="1"/>
        <end position="390"/>
    </location>
</feature>
<feature type="binding site" evidence="1">
    <location>
        <position position="39"/>
    </location>
    <ligand>
        <name>NADP(+)</name>
        <dbReference type="ChEBI" id="CHEBI:58349"/>
    </ligand>
</feature>
<feature type="binding site" evidence="1">
    <location>
        <position position="45"/>
    </location>
    <ligand>
        <name>NADP(+)</name>
        <dbReference type="ChEBI" id="CHEBI:58349"/>
    </ligand>
</feature>
<feature type="binding site" evidence="1">
    <location>
        <begin position="132"/>
        <end position="134"/>
    </location>
    <ligand>
        <name>FMN</name>
        <dbReference type="ChEBI" id="CHEBI:58210"/>
    </ligand>
</feature>
<feature type="binding site" evidence="1">
    <location>
        <begin position="253"/>
        <end position="254"/>
    </location>
    <ligand>
        <name>FMN</name>
        <dbReference type="ChEBI" id="CHEBI:58210"/>
    </ligand>
</feature>
<feature type="binding site" evidence="1">
    <location>
        <position position="298"/>
    </location>
    <ligand>
        <name>FMN</name>
        <dbReference type="ChEBI" id="CHEBI:58210"/>
    </ligand>
</feature>
<feature type="binding site" evidence="1">
    <location>
        <begin position="313"/>
        <end position="317"/>
    </location>
    <ligand>
        <name>FMN</name>
        <dbReference type="ChEBI" id="CHEBI:58210"/>
    </ligand>
</feature>
<feature type="binding site" evidence="1">
    <location>
        <position position="339"/>
    </location>
    <ligand>
        <name>FMN</name>
        <dbReference type="ChEBI" id="CHEBI:58210"/>
    </ligand>
</feature>
<accession>Q5WGS8</accession>
<gene>
    <name evidence="1" type="primary">aroC</name>
    <name type="ordered locus">ABC1892</name>
</gene>
<reference key="1">
    <citation type="submission" date="2003-10" db="EMBL/GenBank/DDBJ databases">
        <title>The complete genome sequence of the alkaliphilic Bacillus clausii KSM-K16.</title>
        <authorList>
            <person name="Takaki Y."/>
            <person name="Kageyama Y."/>
            <person name="Shimamura S."/>
            <person name="Suzuki H."/>
            <person name="Nishi S."/>
            <person name="Hatada Y."/>
            <person name="Kawai S."/>
            <person name="Ito S."/>
            <person name="Horikoshi K."/>
        </authorList>
    </citation>
    <scope>NUCLEOTIDE SEQUENCE [LARGE SCALE GENOMIC DNA]</scope>
    <source>
        <strain>KSM-K16</strain>
    </source>
</reference>
<name>AROC_SHOC1</name>
<dbReference type="EC" id="4.2.3.5" evidence="1"/>
<dbReference type="EMBL" id="AP006627">
    <property type="protein sequence ID" value="BAD64427.1"/>
    <property type="molecule type" value="Genomic_DNA"/>
</dbReference>
<dbReference type="RefSeq" id="WP_011246735.1">
    <property type="nucleotide sequence ID" value="NC_006582.1"/>
</dbReference>
<dbReference type="SMR" id="Q5WGS8"/>
<dbReference type="STRING" id="66692.ABC1892"/>
<dbReference type="KEGG" id="bcl:ABC1892"/>
<dbReference type="eggNOG" id="COG0082">
    <property type="taxonomic scope" value="Bacteria"/>
</dbReference>
<dbReference type="HOGENOM" id="CLU_034547_2_0_9"/>
<dbReference type="OrthoDB" id="9771806at2"/>
<dbReference type="UniPathway" id="UPA00053">
    <property type="reaction ID" value="UER00090"/>
</dbReference>
<dbReference type="Proteomes" id="UP000001168">
    <property type="component" value="Chromosome"/>
</dbReference>
<dbReference type="GO" id="GO:0005829">
    <property type="term" value="C:cytosol"/>
    <property type="evidence" value="ECO:0007669"/>
    <property type="project" value="TreeGrafter"/>
</dbReference>
<dbReference type="GO" id="GO:0004107">
    <property type="term" value="F:chorismate synthase activity"/>
    <property type="evidence" value="ECO:0007669"/>
    <property type="project" value="UniProtKB-UniRule"/>
</dbReference>
<dbReference type="GO" id="GO:0010181">
    <property type="term" value="F:FMN binding"/>
    <property type="evidence" value="ECO:0007669"/>
    <property type="project" value="TreeGrafter"/>
</dbReference>
<dbReference type="GO" id="GO:0008652">
    <property type="term" value="P:amino acid biosynthetic process"/>
    <property type="evidence" value="ECO:0007669"/>
    <property type="project" value="UniProtKB-KW"/>
</dbReference>
<dbReference type="GO" id="GO:0009073">
    <property type="term" value="P:aromatic amino acid family biosynthetic process"/>
    <property type="evidence" value="ECO:0007669"/>
    <property type="project" value="UniProtKB-KW"/>
</dbReference>
<dbReference type="GO" id="GO:0009423">
    <property type="term" value="P:chorismate biosynthetic process"/>
    <property type="evidence" value="ECO:0007669"/>
    <property type="project" value="UniProtKB-UniRule"/>
</dbReference>
<dbReference type="CDD" id="cd07304">
    <property type="entry name" value="Chorismate_synthase"/>
    <property type="match status" value="1"/>
</dbReference>
<dbReference type="FunFam" id="3.60.150.10:FF:000002">
    <property type="entry name" value="Chorismate synthase"/>
    <property type="match status" value="1"/>
</dbReference>
<dbReference type="Gene3D" id="3.60.150.10">
    <property type="entry name" value="Chorismate synthase AroC"/>
    <property type="match status" value="1"/>
</dbReference>
<dbReference type="HAMAP" id="MF_00300">
    <property type="entry name" value="Chorismate_synth"/>
    <property type="match status" value="1"/>
</dbReference>
<dbReference type="InterPro" id="IPR000453">
    <property type="entry name" value="Chorismate_synth"/>
</dbReference>
<dbReference type="InterPro" id="IPR035904">
    <property type="entry name" value="Chorismate_synth_AroC_sf"/>
</dbReference>
<dbReference type="InterPro" id="IPR020541">
    <property type="entry name" value="Chorismate_synthase_CS"/>
</dbReference>
<dbReference type="NCBIfam" id="TIGR00033">
    <property type="entry name" value="aroC"/>
    <property type="match status" value="1"/>
</dbReference>
<dbReference type="NCBIfam" id="NF003793">
    <property type="entry name" value="PRK05382.1"/>
    <property type="match status" value="1"/>
</dbReference>
<dbReference type="PANTHER" id="PTHR21085">
    <property type="entry name" value="CHORISMATE SYNTHASE"/>
    <property type="match status" value="1"/>
</dbReference>
<dbReference type="PANTHER" id="PTHR21085:SF0">
    <property type="entry name" value="CHORISMATE SYNTHASE"/>
    <property type="match status" value="1"/>
</dbReference>
<dbReference type="Pfam" id="PF01264">
    <property type="entry name" value="Chorismate_synt"/>
    <property type="match status" value="1"/>
</dbReference>
<dbReference type="PIRSF" id="PIRSF001456">
    <property type="entry name" value="Chorismate_synth"/>
    <property type="match status" value="1"/>
</dbReference>
<dbReference type="SUPFAM" id="SSF103263">
    <property type="entry name" value="Chorismate synthase, AroC"/>
    <property type="match status" value="1"/>
</dbReference>
<dbReference type="PROSITE" id="PS00787">
    <property type="entry name" value="CHORISMATE_SYNTHASE_1"/>
    <property type="match status" value="1"/>
</dbReference>
<dbReference type="PROSITE" id="PS00788">
    <property type="entry name" value="CHORISMATE_SYNTHASE_2"/>
    <property type="match status" value="1"/>
</dbReference>
<dbReference type="PROSITE" id="PS00789">
    <property type="entry name" value="CHORISMATE_SYNTHASE_3"/>
    <property type="match status" value="1"/>
</dbReference>
<comment type="function">
    <text evidence="1">Catalyzes the anti-1,4-elimination of the C-3 phosphate and the C-6 proR hydrogen from 5-enolpyruvylshikimate-3-phosphate (EPSP) to yield chorismate, which is the branch point compound that serves as the starting substrate for the three terminal pathways of aromatic amino acid biosynthesis. This reaction introduces a second double bond into the aromatic ring system.</text>
</comment>
<comment type="catalytic activity">
    <reaction evidence="1">
        <text>5-O-(1-carboxyvinyl)-3-phosphoshikimate = chorismate + phosphate</text>
        <dbReference type="Rhea" id="RHEA:21020"/>
        <dbReference type="ChEBI" id="CHEBI:29748"/>
        <dbReference type="ChEBI" id="CHEBI:43474"/>
        <dbReference type="ChEBI" id="CHEBI:57701"/>
        <dbReference type="EC" id="4.2.3.5"/>
    </reaction>
</comment>
<comment type="cofactor">
    <cofactor evidence="1">
        <name>FMNH2</name>
        <dbReference type="ChEBI" id="CHEBI:57618"/>
    </cofactor>
    <text evidence="1">Reduced FMN (FMNH(2)).</text>
</comment>
<comment type="pathway">
    <text evidence="1">Metabolic intermediate biosynthesis; chorismate biosynthesis; chorismate from D-erythrose 4-phosphate and phosphoenolpyruvate: step 7/7.</text>
</comment>
<comment type="subunit">
    <text evidence="1">Homotetramer.</text>
</comment>
<comment type="similarity">
    <text evidence="1">Belongs to the chorismate synthase family.</text>
</comment>
<organism>
    <name type="scientific">Shouchella clausii (strain KSM-K16)</name>
    <name type="common">Alkalihalobacillus clausii</name>
    <dbReference type="NCBI Taxonomy" id="66692"/>
    <lineage>
        <taxon>Bacteria</taxon>
        <taxon>Bacillati</taxon>
        <taxon>Bacillota</taxon>
        <taxon>Bacilli</taxon>
        <taxon>Bacillales</taxon>
        <taxon>Bacillaceae</taxon>
        <taxon>Shouchella</taxon>
    </lineage>
</organism>
<protein>
    <recommendedName>
        <fullName evidence="1">Chorismate synthase</fullName>
        <shortName evidence="1">CS</shortName>
        <ecNumber evidence="1">4.2.3.5</ecNumber>
    </recommendedName>
    <alternativeName>
        <fullName evidence="1">5-enolpyruvylshikimate-3-phosphate phospholyase</fullName>
    </alternativeName>
</protein>
<proteinExistence type="inferred from homology"/>
<keyword id="KW-0028">Amino-acid biosynthesis</keyword>
<keyword id="KW-0057">Aromatic amino acid biosynthesis</keyword>
<keyword id="KW-0274">FAD</keyword>
<keyword id="KW-0285">Flavoprotein</keyword>
<keyword id="KW-0288">FMN</keyword>
<keyword id="KW-0456">Lyase</keyword>
<keyword id="KW-0521">NADP</keyword>
<keyword id="KW-1185">Reference proteome</keyword>
<sequence length="390" mass="42378">MRFLTAGESHGPQLTAIIEGVPAQLPLLAEDIDRELARRQGGYGRGRRMQIEKDRVQIVSGVRHGMTTGAPITFVVENKDWKNWTKIMGAEPISEEEAEKMRRKLTRPRPGHADLNGAIKYGHRDMRNVLERSSARETTVRVACGALAKVILKACGIEVAGHVREIGGIRAEETNYATIQELQKRSEESPVRCLDEDASKKMMAAIDKAKQDGDSIGGIVEVVVAGVPIGLGSHVHYDRKLDGKIAGAVMSINAFKGVEIGIGFEAARLPGSQVHDEITWSEEEGYKRKTNRLGGFEGGMTNGMPIVVKGVMKPIPTLYKPLQSVDIDSKEPFAAGVERSDSCAVPAASVVCENVVAWEVANALLDTFGSDQLPLIQAAVERHHAASKEF</sequence>